<keyword id="KW-0004">4Fe-4S</keyword>
<keyword id="KW-0150">Chloroplast</keyword>
<keyword id="KW-0408">Iron</keyword>
<keyword id="KW-0411">Iron-sulfur</keyword>
<keyword id="KW-0472">Membrane</keyword>
<keyword id="KW-0479">Metal-binding</keyword>
<keyword id="KW-0520">NAD</keyword>
<keyword id="KW-0521">NADP</keyword>
<keyword id="KW-0934">Plastid</keyword>
<keyword id="KW-0618">Plastoquinone</keyword>
<keyword id="KW-0874">Quinone</keyword>
<keyword id="KW-0677">Repeat</keyword>
<keyword id="KW-0793">Thylakoid</keyword>
<keyword id="KW-1278">Translocase</keyword>
<protein>
    <recommendedName>
        <fullName evidence="1">NAD(P)H-quinone oxidoreductase subunit I, chloroplastic</fullName>
        <ecNumber evidence="1">7.1.1.-</ecNumber>
    </recommendedName>
    <alternativeName>
        <fullName evidence="1">NAD(P)H dehydrogenase subunit I</fullName>
        <shortName evidence="1">NDH subunit I</shortName>
    </alternativeName>
    <alternativeName>
        <fullName evidence="1">NADH-plastoquinone oxidoreductase subunit I</fullName>
    </alternativeName>
</protein>
<feature type="chain" id="PRO_0000250845" description="NAD(P)H-quinone oxidoreductase subunit I, chloroplastic">
    <location>
        <begin position="1"/>
        <end position="166"/>
    </location>
</feature>
<feature type="domain" description="4Fe-4S ferredoxin-type 1" evidence="1">
    <location>
        <begin position="55"/>
        <end position="84"/>
    </location>
</feature>
<feature type="domain" description="4Fe-4S ferredoxin-type 2" evidence="1">
    <location>
        <begin position="95"/>
        <end position="124"/>
    </location>
</feature>
<feature type="binding site" evidence="1">
    <location>
        <position position="64"/>
    </location>
    <ligand>
        <name>[4Fe-4S] cluster</name>
        <dbReference type="ChEBI" id="CHEBI:49883"/>
        <label>1</label>
    </ligand>
</feature>
<feature type="binding site" evidence="1">
    <location>
        <position position="67"/>
    </location>
    <ligand>
        <name>[4Fe-4S] cluster</name>
        <dbReference type="ChEBI" id="CHEBI:49883"/>
        <label>1</label>
    </ligand>
</feature>
<feature type="binding site" evidence="1">
    <location>
        <position position="70"/>
    </location>
    <ligand>
        <name>[4Fe-4S] cluster</name>
        <dbReference type="ChEBI" id="CHEBI:49883"/>
        <label>1</label>
    </ligand>
</feature>
<feature type="binding site" evidence="1">
    <location>
        <position position="74"/>
    </location>
    <ligand>
        <name>[4Fe-4S] cluster</name>
        <dbReference type="ChEBI" id="CHEBI:49883"/>
        <label>2</label>
    </ligand>
</feature>
<feature type="binding site" evidence="1">
    <location>
        <position position="104"/>
    </location>
    <ligand>
        <name>[4Fe-4S] cluster</name>
        <dbReference type="ChEBI" id="CHEBI:49883"/>
        <label>2</label>
    </ligand>
</feature>
<feature type="binding site" evidence="1">
    <location>
        <position position="107"/>
    </location>
    <ligand>
        <name>[4Fe-4S] cluster</name>
        <dbReference type="ChEBI" id="CHEBI:49883"/>
        <label>2</label>
    </ligand>
</feature>
<feature type="binding site" evidence="1">
    <location>
        <position position="110"/>
    </location>
    <ligand>
        <name>[4Fe-4S] cluster</name>
        <dbReference type="ChEBI" id="CHEBI:49883"/>
        <label>2</label>
    </ligand>
</feature>
<feature type="binding site" evidence="1">
    <location>
        <position position="114"/>
    </location>
    <ligand>
        <name>[4Fe-4S] cluster</name>
        <dbReference type="ChEBI" id="CHEBI:49883"/>
        <label>1</label>
    </ligand>
</feature>
<name>NDHI_ROJSU</name>
<organism>
    <name type="scientific">Rojasianthe superba</name>
    <name type="common">White tree sunflower</name>
    <dbReference type="NCBI Taxonomy" id="121890"/>
    <lineage>
        <taxon>Eukaryota</taxon>
        <taxon>Viridiplantae</taxon>
        <taxon>Streptophyta</taxon>
        <taxon>Embryophyta</taxon>
        <taxon>Tracheophyta</taxon>
        <taxon>Spermatophyta</taxon>
        <taxon>Magnoliopsida</taxon>
        <taxon>eudicotyledons</taxon>
        <taxon>Gunneridae</taxon>
        <taxon>Pentapetalae</taxon>
        <taxon>asterids</taxon>
        <taxon>campanulids</taxon>
        <taxon>Asterales</taxon>
        <taxon>Asteraceae</taxon>
        <taxon>Asteroideae</taxon>
        <taxon>Heliantheae alliance</taxon>
        <taxon>Heliantheae</taxon>
        <taxon>Rojasianthe</taxon>
    </lineage>
</organism>
<accession>Q8HVL7</accession>
<proteinExistence type="inferred from homology"/>
<dbReference type="EC" id="7.1.1.-" evidence="1"/>
<dbReference type="EMBL" id="AF383846">
    <property type="protein sequence ID" value="AAN61787.1"/>
    <property type="molecule type" value="Genomic_DNA"/>
</dbReference>
<dbReference type="SMR" id="Q8HVL7"/>
<dbReference type="GO" id="GO:0009535">
    <property type="term" value="C:chloroplast thylakoid membrane"/>
    <property type="evidence" value="ECO:0007669"/>
    <property type="project" value="UniProtKB-SubCell"/>
</dbReference>
<dbReference type="GO" id="GO:0051539">
    <property type="term" value="F:4 iron, 4 sulfur cluster binding"/>
    <property type="evidence" value="ECO:0007669"/>
    <property type="project" value="UniProtKB-KW"/>
</dbReference>
<dbReference type="GO" id="GO:0005506">
    <property type="term" value="F:iron ion binding"/>
    <property type="evidence" value="ECO:0007669"/>
    <property type="project" value="UniProtKB-UniRule"/>
</dbReference>
<dbReference type="GO" id="GO:0008137">
    <property type="term" value="F:NADH dehydrogenase (ubiquinone) activity"/>
    <property type="evidence" value="ECO:0007669"/>
    <property type="project" value="InterPro"/>
</dbReference>
<dbReference type="GO" id="GO:0048038">
    <property type="term" value="F:quinone binding"/>
    <property type="evidence" value="ECO:0007669"/>
    <property type="project" value="UniProtKB-KW"/>
</dbReference>
<dbReference type="GO" id="GO:0019684">
    <property type="term" value="P:photosynthesis, light reaction"/>
    <property type="evidence" value="ECO:0007669"/>
    <property type="project" value="UniProtKB-UniRule"/>
</dbReference>
<dbReference type="FunFam" id="3.30.70.3270:FF:000006">
    <property type="entry name" value="NAD(P)H-quinone oxidoreductase subunit I, chloroplastic"/>
    <property type="match status" value="1"/>
</dbReference>
<dbReference type="Gene3D" id="3.30.70.3270">
    <property type="match status" value="1"/>
</dbReference>
<dbReference type="HAMAP" id="MF_01351">
    <property type="entry name" value="NDH1_NuoI"/>
    <property type="match status" value="1"/>
</dbReference>
<dbReference type="InterPro" id="IPR017896">
    <property type="entry name" value="4Fe4S_Fe-S-bd"/>
</dbReference>
<dbReference type="InterPro" id="IPR017900">
    <property type="entry name" value="4Fe4S_Fe_S_CS"/>
</dbReference>
<dbReference type="InterPro" id="IPR010226">
    <property type="entry name" value="NADH_quinone_OxRdtase_chainI"/>
</dbReference>
<dbReference type="InterPro" id="IPR004497">
    <property type="entry name" value="NDHI"/>
</dbReference>
<dbReference type="NCBIfam" id="TIGR00403">
    <property type="entry name" value="ndhI"/>
    <property type="match status" value="1"/>
</dbReference>
<dbReference type="NCBIfam" id="TIGR01971">
    <property type="entry name" value="NuoI"/>
    <property type="match status" value="1"/>
</dbReference>
<dbReference type="NCBIfam" id="NF004537">
    <property type="entry name" value="PRK05888.1-3"/>
    <property type="match status" value="1"/>
</dbReference>
<dbReference type="PANTHER" id="PTHR47275">
    <property type="entry name" value="NAD(P)H-QUINONE OXIDOREDUCTASE SUBUNIT I, CHLOROPLASTIC"/>
    <property type="match status" value="1"/>
</dbReference>
<dbReference type="PANTHER" id="PTHR47275:SF1">
    <property type="entry name" value="NAD(P)H-QUINONE OXIDOREDUCTASE SUBUNIT I, CHLOROPLASTIC"/>
    <property type="match status" value="1"/>
</dbReference>
<dbReference type="Pfam" id="PF00037">
    <property type="entry name" value="Fer4"/>
    <property type="match status" value="2"/>
</dbReference>
<dbReference type="SUPFAM" id="SSF54862">
    <property type="entry name" value="4Fe-4S ferredoxins"/>
    <property type="match status" value="1"/>
</dbReference>
<dbReference type="PROSITE" id="PS00198">
    <property type="entry name" value="4FE4S_FER_1"/>
    <property type="match status" value="2"/>
</dbReference>
<dbReference type="PROSITE" id="PS51379">
    <property type="entry name" value="4FE4S_FER_2"/>
    <property type="match status" value="2"/>
</dbReference>
<sequence length="166" mass="19475">MFPMVTEFMNYGQQTVRAARYIGQGFMITLSHANRLPVTIQYPYEKLITSERFRGRIHFEFDKCIACEVCVRVCPIDLPVVDWKLETDIRKKRLLNYSIDFGICIFCGNCVEYCPTNCLSMTEEYELSTYDRHELNYNQIALGRLPMSIIDDYTIRTILNLPEIKT</sequence>
<geneLocation type="chloroplast"/>
<comment type="function">
    <text evidence="1">NDH shuttles electrons from NAD(P)H:plastoquinone, via FMN and iron-sulfur (Fe-S) centers, to quinones in the photosynthetic chain and possibly in a chloroplast respiratory chain. The immediate electron acceptor for the enzyme in this species is believed to be plastoquinone. Couples the redox reaction to proton translocation, and thus conserves the redox energy in a proton gradient.</text>
</comment>
<comment type="catalytic activity">
    <reaction evidence="1">
        <text>a plastoquinone + NADH + (n+1) H(+)(in) = a plastoquinol + NAD(+) + n H(+)(out)</text>
        <dbReference type="Rhea" id="RHEA:42608"/>
        <dbReference type="Rhea" id="RHEA-COMP:9561"/>
        <dbReference type="Rhea" id="RHEA-COMP:9562"/>
        <dbReference type="ChEBI" id="CHEBI:15378"/>
        <dbReference type="ChEBI" id="CHEBI:17757"/>
        <dbReference type="ChEBI" id="CHEBI:57540"/>
        <dbReference type="ChEBI" id="CHEBI:57945"/>
        <dbReference type="ChEBI" id="CHEBI:62192"/>
    </reaction>
</comment>
<comment type="catalytic activity">
    <reaction evidence="1">
        <text>a plastoquinone + NADPH + (n+1) H(+)(in) = a plastoquinol + NADP(+) + n H(+)(out)</text>
        <dbReference type="Rhea" id="RHEA:42612"/>
        <dbReference type="Rhea" id="RHEA-COMP:9561"/>
        <dbReference type="Rhea" id="RHEA-COMP:9562"/>
        <dbReference type="ChEBI" id="CHEBI:15378"/>
        <dbReference type="ChEBI" id="CHEBI:17757"/>
        <dbReference type="ChEBI" id="CHEBI:57783"/>
        <dbReference type="ChEBI" id="CHEBI:58349"/>
        <dbReference type="ChEBI" id="CHEBI:62192"/>
    </reaction>
</comment>
<comment type="cofactor">
    <cofactor evidence="1">
        <name>[4Fe-4S] cluster</name>
        <dbReference type="ChEBI" id="CHEBI:49883"/>
    </cofactor>
    <text evidence="1">Binds 2 [4Fe-4S] clusters per subunit.</text>
</comment>
<comment type="subunit">
    <text evidence="1">NDH is composed of at least 16 different subunits, 5 of which are encoded in the nucleus.</text>
</comment>
<comment type="subcellular location">
    <subcellularLocation>
        <location evidence="1">Plastid</location>
        <location evidence="1">Chloroplast thylakoid membrane</location>
        <topology evidence="1">Peripheral membrane protein</topology>
    </subcellularLocation>
</comment>
<comment type="similarity">
    <text evidence="1">Belongs to the complex I 23 kDa subunit family.</text>
</comment>
<gene>
    <name evidence="1" type="primary">ndhI</name>
</gene>
<reference key="1">
    <citation type="submission" date="2003-01" db="EMBL/GenBank/DDBJ databases">
        <title>Chloroplast DNA phylogeny of tribe Heliantheae (Asteraceae).</title>
        <authorList>
            <person name="Panero J.L."/>
            <person name="Baldwin B.G."/>
            <person name="Schilling E.E."/>
            <person name="Clevinger J.A."/>
        </authorList>
    </citation>
    <scope>NUCLEOTIDE SEQUENCE [GENOMIC DNA]</scope>
</reference>
<evidence type="ECO:0000255" key="1">
    <source>
        <dbReference type="HAMAP-Rule" id="MF_01351"/>
    </source>
</evidence>